<reference key="1">
    <citation type="submission" date="2008-02" db="EMBL/GenBank/DDBJ databases">
        <title>Complete sequence of Yersinia pseudotuberculosis YPIII.</title>
        <authorList>
            <consortium name="US DOE Joint Genome Institute"/>
            <person name="Copeland A."/>
            <person name="Lucas S."/>
            <person name="Lapidus A."/>
            <person name="Glavina del Rio T."/>
            <person name="Dalin E."/>
            <person name="Tice H."/>
            <person name="Bruce D."/>
            <person name="Goodwin L."/>
            <person name="Pitluck S."/>
            <person name="Munk A.C."/>
            <person name="Brettin T."/>
            <person name="Detter J.C."/>
            <person name="Han C."/>
            <person name="Tapia R."/>
            <person name="Schmutz J."/>
            <person name="Larimer F."/>
            <person name="Land M."/>
            <person name="Hauser L."/>
            <person name="Challacombe J.F."/>
            <person name="Green L."/>
            <person name="Lindler L.E."/>
            <person name="Nikolich M.P."/>
            <person name="Richardson P."/>
        </authorList>
    </citation>
    <scope>NUCLEOTIDE SEQUENCE [LARGE SCALE GENOMIC DNA]</scope>
    <source>
        <strain>YPIII</strain>
    </source>
</reference>
<evidence type="ECO:0000255" key="1">
    <source>
        <dbReference type="HAMAP-Rule" id="MF_00090"/>
    </source>
</evidence>
<comment type="function">
    <text evidence="1">Catalyzes the methyl esterification of L-isoaspartyl residues in peptides and proteins that result from spontaneous decomposition of normal L-aspartyl and L-asparaginyl residues. It plays a role in the repair and/or degradation of damaged proteins.</text>
</comment>
<comment type="catalytic activity">
    <reaction evidence="1">
        <text>[protein]-L-isoaspartate + S-adenosyl-L-methionine = [protein]-L-isoaspartate alpha-methyl ester + S-adenosyl-L-homocysteine</text>
        <dbReference type="Rhea" id="RHEA:12705"/>
        <dbReference type="Rhea" id="RHEA-COMP:12143"/>
        <dbReference type="Rhea" id="RHEA-COMP:12144"/>
        <dbReference type="ChEBI" id="CHEBI:57856"/>
        <dbReference type="ChEBI" id="CHEBI:59789"/>
        <dbReference type="ChEBI" id="CHEBI:90596"/>
        <dbReference type="ChEBI" id="CHEBI:90598"/>
        <dbReference type="EC" id="2.1.1.77"/>
    </reaction>
</comment>
<comment type="subcellular location">
    <subcellularLocation>
        <location evidence="1">Cytoplasm</location>
    </subcellularLocation>
</comment>
<comment type="similarity">
    <text evidence="1">Belongs to the methyltransferase superfamily. L-isoaspartyl/D-aspartyl protein methyltransferase family.</text>
</comment>
<protein>
    <recommendedName>
        <fullName evidence="1">Protein-L-isoaspartate O-methyltransferase</fullName>
        <ecNumber evidence="1">2.1.1.77</ecNumber>
    </recommendedName>
    <alternativeName>
        <fullName evidence="1">L-isoaspartyl protein carboxyl methyltransferase</fullName>
    </alternativeName>
    <alternativeName>
        <fullName evidence="1">Protein L-isoaspartyl methyltransferase</fullName>
    </alternativeName>
    <alternativeName>
        <fullName evidence="1">Protein-beta-aspartate methyltransferase</fullName>
        <shortName evidence="1">PIMT</shortName>
    </alternativeName>
</protein>
<proteinExistence type="inferred from homology"/>
<gene>
    <name evidence="1" type="primary">pcm</name>
    <name type="ordered locus">YPK_3427</name>
</gene>
<keyword id="KW-0963">Cytoplasm</keyword>
<keyword id="KW-0489">Methyltransferase</keyword>
<keyword id="KW-0949">S-adenosyl-L-methionine</keyword>
<keyword id="KW-0808">Transferase</keyword>
<sequence>MVNKRMQTLLMQLRQQGIHDERLLQAIEAVPRERFVDEALAHKAYENTALPIGAGQTISQPYMVARMTELLQLTPTSRVLEIGTGSGYQTAILAHLVDHVCSVERIKGLQWQAKRRLKQLDLHNVSTRHGDGWLGWQSRGPFDAIIVTAAPPEIPDALLEQLDEGGILVLPVGEQFQTLKYVQRRNNEYHIETVEAVRFVPLVKGELA</sequence>
<name>PIMT_YERPY</name>
<accession>B1JJF4</accession>
<dbReference type="EC" id="2.1.1.77" evidence="1"/>
<dbReference type="EMBL" id="CP000950">
    <property type="protein sequence ID" value="ACA69694.1"/>
    <property type="molecule type" value="Genomic_DNA"/>
</dbReference>
<dbReference type="RefSeq" id="WP_002209395.1">
    <property type="nucleotide sequence ID" value="NZ_CP009792.1"/>
</dbReference>
<dbReference type="SMR" id="B1JJF4"/>
<dbReference type="KEGG" id="ypy:YPK_3427"/>
<dbReference type="PATRIC" id="fig|502800.11.peg.4165"/>
<dbReference type="GO" id="GO:0005737">
    <property type="term" value="C:cytoplasm"/>
    <property type="evidence" value="ECO:0007669"/>
    <property type="project" value="UniProtKB-SubCell"/>
</dbReference>
<dbReference type="GO" id="GO:0004719">
    <property type="term" value="F:protein-L-isoaspartate (D-aspartate) O-methyltransferase activity"/>
    <property type="evidence" value="ECO:0007669"/>
    <property type="project" value="UniProtKB-UniRule"/>
</dbReference>
<dbReference type="GO" id="GO:0032259">
    <property type="term" value="P:methylation"/>
    <property type="evidence" value="ECO:0007669"/>
    <property type="project" value="UniProtKB-KW"/>
</dbReference>
<dbReference type="GO" id="GO:0036211">
    <property type="term" value="P:protein modification process"/>
    <property type="evidence" value="ECO:0007669"/>
    <property type="project" value="UniProtKB-UniRule"/>
</dbReference>
<dbReference type="GO" id="GO:0030091">
    <property type="term" value="P:protein repair"/>
    <property type="evidence" value="ECO:0007669"/>
    <property type="project" value="UniProtKB-UniRule"/>
</dbReference>
<dbReference type="CDD" id="cd02440">
    <property type="entry name" value="AdoMet_MTases"/>
    <property type="match status" value="1"/>
</dbReference>
<dbReference type="FunFam" id="3.40.50.150:FF:000010">
    <property type="entry name" value="Protein-L-isoaspartate O-methyltransferase"/>
    <property type="match status" value="1"/>
</dbReference>
<dbReference type="Gene3D" id="3.40.50.150">
    <property type="entry name" value="Vaccinia Virus protein VP39"/>
    <property type="match status" value="1"/>
</dbReference>
<dbReference type="HAMAP" id="MF_00090">
    <property type="entry name" value="PIMT"/>
    <property type="match status" value="1"/>
</dbReference>
<dbReference type="InterPro" id="IPR000682">
    <property type="entry name" value="PCMT"/>
</dbReference>
<dbReference type="InterPro" id="IPR029063">
    <property type="entry name" value="SAM-dependent_MTases_sf"/>
</dbReference>
<dbReference type="NCBIfam" id="TIGR00080">
    <property type="entry name" value="pimt"/>
    <property type="match status" value="1"/>
</dbReference>
<dbReference type="NCBIfam" id="NF001453">
    <property type="entry name" value="PRK00312.1"/>
    <property type="match status" value="1"/>
</dbReference>
<dbReference type="PANTHER" id="PTHR11579">
    <property type="entry name" value="PROTEIN-L-ISOASPARTATE O-METHYLTRANSFERASE"/>
    <property type="match status" value="1"/>
</dbReference>
<dbReference type="PANTHER" id="PTHR11579:SF0">
    <property type="entry name" value="PROTEIN-L-ISOASPARTATE(D-ASPARTATE) O-METHYLTRANSFERASE"/>
    <property type="match status" value="1"/>
</dbReference>
<dbReference type="Pfam" id="PF01135">
    <property type="entry name" value="PCMT"/>
    <property type="match status" value="1"/>
</dbReference>
<dbReference type="SUPFAM" id="SSF53335">
    <property type="entry name" value="S-adenosyl-L-methionine-dependent methyltransferases"/>
    <property type="match status" value="1"/>
</dbReference>
<dbReference type="PROSITE" id="PS01279">
    <property type="entry name" value="PCMT"/>
    <property type="match status" value="1"/>
</dbReference>
<organism>
    <name type="scientific">Yersinia pseudotuberculosis serotype O:3 (strain YPIII)</name>
    <dbReference type="NCBI Taxonomy" id="502800"/>
    <lineage>
        <taxon>Bacteria</taxon>
        <taxon>Pseudomonadati</taxon>
        <taxon>Pseudomonadota</taxon>
        <taxon>Gammaproteobacteria</taxon>
        <taxon>Enterobacterales</taxon>
        <taxon>Yersiniaceae</taxon>
        <taxon>Yersinia</taxon>
    </lineage>
</organism>
<feature type="chain" id="PRO_0000351964" description="Protein-L-isoaspartate O-methyltransferase">
    <location>
        <begin position="1"/>
        <end position="208"/>
    </location>
</feature>
<feature type="active site" evidence="1">
    <location>
        <position position="59"/>
    </location>
</feature>